<accession>Q1MN40</accession>
<evidence type="ECO:0000255" key="1">
    <source>
        <dbReference type="HAMAP-Rule" id="MF_00003"/>
    </source>
</evidence>
<reference key="1">
    <citation type="journal article" date="2006" name="Genome Biol.">
        <title>The genome of Rhizobium leguminosarum has recognizable core and accessory components.</title>
        <authorList>
            <person name="Young J.P.W."/>
            <person name="Crossman L.C."/>
            <person name="Johnston A.W.B."/>
            <person name="Thomson N.R."/>
            <person name="Ghazoui Z.F."/>
            <person name="Hull K.H."/>
            <person name="Wexler M."/>
            <person name="Curson A.R.J."/>
            <person name="Todd J.D."/>
            <person name="Poole P.S."/>
            <person name="Mauchline T.H."/>
            <person name="East A.K."/>
            <person name="Quail M.A."/>
            <person name="Churcher C."/>
            <person name="Arrowsmith C."/>
            <person name="Cherevach I."/>
            <person name="Chillingworth T."/>
            <person name="Clarke K."/>
            <person name="Cronin A."/>
            <person name="Davis P."/>
            <person name="Fraser A."/>
            <person name="Hance Z."/>
            <person name="Hauser H."/>
            <person name="Jagels K."/>
            <person name="Moule S."/>
            <person name="Mungall K."/>
            <person name="Norbertczak H."/>
            <person name="Rabbinowitsch E."/>
            <person name="Sanders M."/>
            <person name="Simmonds M."/>
            <person name="Whitehead S."/>
            <person name="Parkhill J."/>
        </authorList>
    </citation>
    <scope>NUCLEOTIDE SEQUENCE [LARGE SCALE GENOMIC DNA]</scope>
    <source>
        <strain>DSM 114642 / LMG 32736 / 3841</strain>
    </source>
</reference>
<organism>
    <name type="scientific">Rhizobium johnstonii (strain DSM 114642 / LMG 32736 / 3841)</name>
    <name type="common">Rhizobium leguminosarum bv. viciae</name>
    <dbReference type="NCBI Taxonomy" id="216596"/>
    <lineage>
        <taxon>Bacteria</taxon>
        <taxon>Pseudomonadati</taxon>
        <taxon>Pseudomonadota</taxon>
        <taxon>Alphaproteobacteria</taxon>
        <taxon>Hyphomicrobiales</taxon>
        <taxon>Rhizobiaceae</taxon>
        <taxon>Rhizobium/Agrobacterium group</taxon>
        <taxon>Rhizobium</taxon>
        <taxon>Rhizobium johnstonii</taxon>
    </lineage>
</organism>
<protein>
    <recommendedName>
        <fullName evidence="1">Ribosome-binding factor A</fullName>
    </recommendedName>
</protein>
<keyword id="KW-0963">Cytoplasm</keyword>
<keyword id="KW-0690">Ribosome biogenesis</keyword>
<gene>
    <name evidence="1" type="primary">rbfA</name>
    <name type="ordered locus">RL0124</name>
</gene>
<name>RBFA_RHIJ3</name>
<proteinExistence type="inferred from homology"/>
<feature type="chain" id="PRO_1000000187" description="Ribosome-binding factor A">
    <location>
        <begin position="1"/>
        <end position="134"/>
    </location>
</feature>
<comment type="function">
    <text evidence="1">One of several proteins that assist in the late maturation steps of the functional core of the 30S ribosomal subunit. Associates with free 30S ribosomal subunits (but not with 30S subunits that are part of 70S ribosomes or polysomes). Required for efficient processing of 16S rRNA. May interact with the 5'-terminal helix region of 16S rRNA.</text>
</comment>
<comment type="subunit">
    <text evidence="1">Monomer. Binds 30S ribosomal subunits, but not 50S ribosomal subunits or 70S ribosomes.</text>
</comment>
<comment type="subcellular location">
    <subcellularLocation>
        <location evidence="1">Cytoplasm</location>
    </subcellularLocation>
</comment>
<comment type="similarity">
    <text evidence="1">Belongs to the RbfA family.</text>
</comment>
<sequence>MTRPTSSAPSQRMLRIGEQVRAAITQVLQRGEVRDDVIEATVISVSEVRMSPDLKIATAYVTPLGVSDHSIVIEALNRHARFIRGRLGPQLRQMKYMPEVRFRDDTSFDNYKKIDELLRSPEVSRDLDGDNDEQ</sequence>
<dbReference type="EMBL" id="AM236080">
    <property type="protein sequence ID" value="CAK05612.1"/>
    <property type="molecule type" value="Genomic_DNA"/>
</dbReference>
<dbReference type="RefSeq" id="WP_003544322.1">
    <property type="nucleotide sequence ID" value="NC_008380.1"/>
</dbReference>
<dbReference type="SMR" id="Q1MN40"/>
<dbReference type="EnsemblBacteria" id="CAK05612">
    <property type="protein sequence ID" value="CAK05612"/>
    <property type="gene ID" value="RL0124"/>
</dbReference>
<dbReference type="KEGG" id="rle:RL0124"/>
<dbReference type="eggNOG" id="COG0858">
    <property type="taxonomic scope" value="Bacteria"/>
</dbReference>
<dbReference type="HOGENOM" id="CLU_089475_1_0_5"/>
<dbReference type="Proteomes" id="UP000006575">
    <property type="component" value="Chromosome"/>
</dbReference>
<dbReference type="GO" id="GO:0005829">
    <property type="term" value="C:cytosol"/>
    <property type="evidence" value="ECO:0007669"/>
    <property type="project" value="TreeGrafter"/>
</dbReference>
<dbReference type="GO" id="GO:0043024">
    <property type="term" value="F:ribosomal small subunit binding"/>
    <property type="evidence" value="ECO:0007669"/>
    <property type="project" value="TreeGrafter"/>
</dbReference>
<dbReference type="GO" id="GO:0030490">
    <property type="term" value="P:maturation of SSU-rRNA"/>
    <property type="evidence" value="ECO:0007669"/>
    <property type="project" value="UniProtKB-UniRule"/>
</dbReference>
<dbReference type="Gene3D" id="3.30.300.20">
    <property type="match status" value="1"/>
</dbReference>
<dbReference type="HAMAP" id="MF_00003">
    <property type="entry name" value="RbfA"/>
    <property type="match status" value="1"/>
</dbReference>
<dbReference type="InterPro" id="IPR015946">
    <property type="entry name" value="KH_dom-like_a/b"/>
</dbReference>
<dbReference type="InterPro" id="IPR000238">
    <property type="entry name" value="RbfA"/>
</dbReference>
<dbReference type="InterPro" id="IPR023799">
    <property type="entry name" value="RbfA_dom_sf"/>
</dbReference>
<dbReference type="InterPro" id="IPR020053">
    <property type="entry name" value="Ribosome-bd_factorA_CS"/>
</dbReference>
<dbReference type="NCBIfam" id="NF001802">
    <property type="entry name" value="PRK00521.2-5"/>
    <property type="match status" value="1"/>
</dbReference>
<dbReference type="NCBIfam" id="TIGR00082">
    <property type="entry name" value="rbfA"/>
    <property type="match status" value="1"/>
</dbReference>
<dbReference type="PANTHER" id="PTHR33515">
    <property type="entry name" value="RIBOSOME-BINDING FACTOR A, CHLOROPLASTIC-RELATED"/>
    <property type="match status" value="1"/>
</dbReference>
<dbReference type="PANTHER" id="PTHR33515:SF1">
    <property type="entry name" value="RIBOSOME-BINDING FACTOR A, CHLOROPLASTIC-RELATED"/>
    <property type="match status" value="1"/>
</dbReference>
<dbReference type="Pfam" id="PF02033">
    <property type="entry name" value="RBFA"/>
    <property type="match status" value="1"/>
</dbReference>
<dbReference type="SUPFAM" id="SSF89919">
    <property type="entry name" value="Ribosome-binding factor A, RbfA"/>
    <property type="match status" value="1"/>
</dbReference>
<dbReference type="PROSITE" id="PS01319">
    <property type="entry name" value="RBFA"/>
    <property type="match status" value="1"/>
</dbReference>